<sequence>MDSTARGHAPLCRTSNQRGLGTRLNPYYQSTPHQPMVQSMSNPIGSYGEQGNAQIIGSSGQVLSTGPPPGLAPVQCNDFDSCYSSCDDISHPSLSRESSDPSKIDDDQTAPMIRYPAPEVVEFATKLGYSTEQLSHVLNTIGVDSRMDDVLSELVKMGLPGGKPENSGKSGSRNSPEPIMTSSASSSSASSSSSHRPIRQSVSIATSSPATSSSTPSKYNPDPSLRAVVVDGSNVAMLHGRKEVFSCAGLRECLNYFLERGHPEVLIFIPQYRREQPRSDSPITDQHILQEIERHIIYTPSRNVNGRRVVCHDDRYILRTAELKDAVIVSNDEYRDLTRENPAWRKIVEERLLMFTFVEDKFMPPDDPSGRHGPRIESFLSKVPVVSSNPLVCPYARKCTYGNKCKFYHPERANGQHMSVTERLMKENQQKKSLGAVKSMQYEMFKNKHAALSRTQSLNVVKQLTENMSQLPPTPESPMQMPRQHMQLQQANSAPWQQHTVVQRHGSSPLTPVNRQMNVYPDMYNMSQQQNHQVLPNQHGVIGGQRPPKMTTTVSQTHLFAPSTAVWGHSELSVGPVNTGSDESLAEVRSRVHFHLCNIFPHDFVESVMAANPEEVNAPVLCELIIRAQKEYRK</sequence>
<keyword id="KW-0963">Cytoplasm</keyword>
<keyword id="KW-0255">Endonuclease</keyword>
<keyword id="KW-0378">Hydrolase</keyword>
<keyword id="KW-0460">Magnesium</keyword>
<keyword id="KW-0479">Metal-binding</keyword>
<keyword id="KW-0540">Nuclease</keyword>
<keyword id="KW-1185">Reference proteome</keyword>
<keyword id="KW-0694">RNA-binding</keyword>
<keyword id="KW-0862">Zinc</keyword>
<keyword id="KW-0863">Zinc-finger</keyword>
<accession>Q95YE2</accession>
<accession>G4S4L8</accession>
<comment type="function">
    <text evidence="5 6 7 8">Endonuclease which binds to the 3'UTR of target mRNAs and induces degradation of the transcript (PubMed:27746047). Acts together with rle-1 to repress the expression of the transcription factor ets-4 by binding to the conserved ADE (alternate decay element) and RCE (REGE-1 cleavage element) stem loop structure in its 3'UTR, which controls the expression of genes in the IIS and TORC1 pathways, including those involved in lipid metabolism and autophagosome formation (PubMed:27746047, PubMed:35819231, PubMed:37556491). May play a role in the clearance of apoptotic cell corpses (PubMed:18425118).</text>
</comment>
<comment type="cofactor">
    <cofactor evidence="1">
        <name>Mg(2+)</name>
        <dbReference type="ChEBI" id="CHEBI:18420"/>
    </cofactor>
</comment>
<comment type="subcellular location">
    <subcellularLocation>
        <location evidence="11">Cytoplasm</location>
    </subcellularLocation>
</comment>
<comment type="tissue specificity">
    <text evidence="6 7">Expressed in the intestinal cells adjacent to the pharynx.</text>
</comment>
<comment type="disruption phenotype">
    <text evidence="5 6 7">Viable, but exhibit slower development and have reduced body fat (PubMed:27746047). RNAi-mediated knockdown results in increased sensitivity and reduced survival in response to lower temperatures (PubMed:27746047). RNAi-mediated knockdown results in increased expression of the transcription factor ets-4 in the nuclei of intestinal cells, which may further result in changes in the expression of genes involved in lipid metabolism (PubMed:27746047, PubMed:35819231). RNAi-mediated knockdown also causes a defect in the clearance of apoptotic cell corpses in hermaphrodite gonads (PubMed:18425118).</text>
</comment>
<comment type="similarity">
    <text evidence="10">Belongs to the ZC3H12 family.</text>
</comment>
<reference evidence="12" key="1">
    <citation type="journal article" date="1998" name="Science">
        <title>Genome sequence of the nematode C. elegans: a platform for investigating biology.</title>
        <authorList>
            <consortium name="The C. elegans sequencing consortium"/>
        </authorList>
    </citation>
    <scope>NUCLEOTIDE SEQUENCE [LARGE SCALE GENOMIC DNA]</scope>
    <source>
        <strain evidence="12">Bristol N2</strain>
    </source>
</reference>
<reference evidence="10" key="2">
    <citation type="journal article" date="2008" name="Nat. Cell Biol.">
        <title>A pathway for phagosome maturation during engulfment of apoptotic cells.</title>
        <authorList>
            <person name="Kinchen J.M."/>
            <person name="Doukoumetzidis K."/>
            <person name="Almendinger J."/>
            <person name="Stergiou L."/>
            <person name="Tosello-Trampont A."/>
            <person name="Sifri C.D."/>
            <person name="Hengartner M.O."/>
            <person name="Ravichandran K.S."/>
        </authorList>
    </citation>
    <scope>FUNCTION</scope>
    <scope>DISRUPTION PHENOTYPE</scope>
</reference>
<reference evidence="10" key="3">
    <citation type="journal article" date="2016" name="Dev. Cell">
        <title>Ribonuclease-mediated control of body fat.</title>
        <authorList>
            <person name="Habacher C."/>
            <person name="Guo Y."/>
            <person name="Venz R."/>
            <person name="Kumari P."/>
            <person name="Neagu A."/>
            <person name="Gaidatzis D."/>
            <person name="Harvald E.B."/>
            <person name="Faergeman N.J."/>
            <person name="Gut H."/>
            <person name="Ciosk R."/>
        </authorList>
    </citation>
    <scope>FUNCTION</scope>
    <scope>CATALYTIC ACTIVITY</scope>
    <scope>SUBCELLULAR LOCATION</scope>
    <scope>TISSUE SPECIFICITY</scope>
    <scope>DISRUPTION PHENOTYPE</scope>
    <scope>MUTAGENESIS OF ASP-231; ASP-313; ASP-314 AND ASP-332</scope>
</reference>
<reference evidence="10" key="4">
    <citation type="journal article" date="2022" name="Nucleic Acids Res.">
        <title>The silencing of ets-4 mRNA relies on the functional cooperation between REGE-1/Regnase-1 and RLE-1/Roquin-1.</title>
        <authorList>
            <person name="Sobanska D."/>
            <person name="Komur A.A."/>
            <person name="Chabowska-Kita A."/>
            <person name="Gumna J."/>
            <person name="Kumari P."/>
            <person name="Pachulska-Wieczorek K."/>
            <person name="Ciosk R."/>
        </authorList>
    </citation>
    <scope>FUNCTION</scope>
    <scope>TISSUE SPECIFICITY</scope>
    <scope>DISRUPTION PHENOTYPE</scope>
</reference>
<reference evidence="10" key="5">
    <citation type="journal article" date="2023" name="PLoS Genet.">
        <title>Rege-1 promotes C. elegans survival by modulating IIS and TOR pathways.</title>
        <authorList>
            <person name="Tsai Y.T."/>
            <person name="Chang C.H."/>
            <person name="Tsai H.Y."/>
        </authorList>
    </citation>
    <scope>FUNCTION</scope>
    <scope>MUTAGENESIS OF 148-ASP--LYS-634 AND ASP-231</scope>
</reference>
<gene>
    <name evidence="9 13" type="primary">rege-1</name>
    <name evidence="13" type="ORF">C30F12.1</name>
</gene>
<proteinExistence type="evidence at protein level"/>
<name>REGE1_CAEEL</name>
<dbReference type="EC" id="3.1.-.-" evidence="6"/>
<dbReference type="EMBL" id="BX284601">
    <property type="protein sequence ID" value="CCD66238.1"/>
    <property type="molecule type" value="Genomic_DNA"/>
</dbReference>
<dbReference type="RefSeq" id="NP_491985.4">
    <property type="nucleotide sequence ID" value="NM_059584.5"/>
</dbReference>
<dbReference type="SMR" id="Q95YE2"/>
<dbReference type="DIP" id="DIP-25963N"/>
<dbReference type="FunCoup" id="Q95YE2">
    <property type="interactions" value="198"/>
</dbReference>
<dbReference type="IntAct" id="Q95YE2">
    <property type="interactions" value="1"/>
</dbReference>
<dbReference type="STRING" id="6239.C30F12.1.1"/>
<dbReference type="PaxDb" id="6239-C30F12.1"/>
<dbReference type="PeptideAtlas" id="Q95YE2"/>
<dbReference type="EnsemblMetazoa" id="C30F12.1.1">
    <property type="protein sequence ID" value="C30F12.1.1"/>
    <property type="gene ID" value="WBGene00016260"/>
</dbReference>
<dbReference type="GeneID" id="172426"/>
<dbReference type="KEGG" id="cel:CELE_C30F12.1"/>
<dbReference type="UCSC" id="C30F12.1">
    <property type="organism name" value="c. elegans"/>
</dbReference>
<dbReference type="AGR" id="WB:WBGene00016260"/>
<dbReference type="CTD" id="172426"/>
<dbReference type="WormBase" id="C30F12.1">
    <property type="protein sequence ID" value="CE40689"/>
    <property type="gene ID" value="WBGene00016260"/>
    <property type="gene designation" value="rege-1"/>
</dbReference>
<dbReference type="eggNOG" id="KOG3777">
    <property type="taxonomic scope" value="Eukaryota"/>
</dbReference>
<dbReference type="GeneTree" id="ENSGT00940000170648"/>
<dbReference type="HOGENOM" id="CLU_013020_2_0_1"/>
<dbReference type="InParanoid" id="Q95YE2"/>
<dbReference type="OMA" id="ERANGQH"/>
<dbReference type="OrthoDB" id="392925at2759"/>
<dbReference type="PhylomeDB" id="Q95YE2"/>
<dbReference type="PRO" id="PR:Q95YE2"/>
<dbReference type="Proteomes" id="UP000001940">
    <property type="component" value="Chromosome I"/>
</dbReference>
<dbReference type="Bgee" id="WBGene00016260">
    <property type="expression patterns" value="Expressed in pharyngeal muscle cell (C elegans) and 3 other cell types or tissues"/>
</dbReference>
<dbReference type="GO" id="GO:0036464">
    <property type="term" value="C:cytoplasmic ribonucleoprotein granule"/>
    <property type="evidence" value="ECO:0000318"/>
    <property type="project" value="GO_Central"/>
</dbReference>
<dbReference type="GO" id="GO:0005634">
    <property type="term" value="C:nucleus"/>
    <property type="evidence" value="ECO:0000318"/>
    <property type="project" value="GO_Central"/>
</dbReference>
<dbReference type="GO" id="GO:0003729">
    <property type="term" value="F:mRNA binding"/>
    <property type="evidence" value="ECO:0000318"/>
    <property type="project" value="GO_Central"/>
</dbReference>
<dbReference type="GO" id="GO:0004521">
    <property type="term" value="F:RNA endonuclease activity"/>
    <property type="evidence" value="ECO:0000318"/>
    <property type="project" value="GO_Central"/>
</dbReference>
<dbReference type="GO" id="GO:0008270">
    <property type="term" value="F:zinc ion binding"/>
    <property type="evidence" value="ECO:0007669"/>
    <property type="project" value="UniProtKB-KW"/>
</dbReference>
<dbReference type="FunFam" id="3.40.50.11980:FF:000001">
    <property type="entry name" value="ZC3H12A isoform 1"/>
    <property type="match status" value="1"/>
</dbReference>
<dbReference type="Gene3D" id="3.40.50.11980">
    <property type="match status" value="1"/>
</dbReference>
<dbReference type="InterPro" id="IPR040546">
    <property type="entry name" value="Rege-1_UBA-like"/>
</dbReference>
<dbReference type="InterPro" id="IPR040757">
    <property type="entry name" value="Regnase_1/ZC3H12_C"/>
</dbReference>
<dbReference type="InterPro" id="IPR021869">
    <property type="entry name" value="RNase_Zc3h12_NYN"/>
</dbReference>
<dbReference type="InterPro" id="IPR051101">
    <property type="entry name" value="ZC3H12/N4BP1_RNase_Reg"/>
</dbReference>
<dbReference type="InterPro" id="IPR000571">
    <property type="entry name" value="Znf_CCCH"/>
</dbReference>
<dbReference type="PANTHER" id="PTHR12876:SF37">
    <property type="entry name" value="ENDORIBONUCLEASE REGE-1-RELATED"/>
    <property type="match status" value="1"/>
</dbReference>
<dbReference type="PANTHER" id="PTHR12876">
    <property type="entry name" value="N4BP1-RELATED"/>
    <property type="match status" value="1"/>
</dbReference>
<dbReference type="Pfam" id="PF18561">
    <property type="entry name" value="Regnase_1_C"/>
    <property type="match status" value="1"/>
</dbReference>
<dbReference type="Pfam" id="PF11977">
    <property type="entry name" value="RNase_Zc3h12a"/>
    <property type="match status" value="1"/>
</dbReference>
<dbReference type="Pfam" id="PF18039">
    <property type="entry name" value="UBA_6"/>
    <property type="match status" value="1"/>
</dbReference>
<dbReference type="PROSITE" id="PS50103">
    <property type="entry name" value="ZF_C3H1"/>
    <property type="match status" value="1"/>
</dbReference>
<evidence type="ECO:0000250" key="1">
    <source>
        <dbReference type="UniProtKB" id="Q5D1E8"/>
    </source>
</evidence>
<evidence type="ECO:0000255" key="2"/>
<evidence type="ECO:0000255" key="3">
    <source>
        <dbReference type="PROSITE-ProRule" id="PRU00723"/>
    </source>
</evidence>
<evidence type="ECO:0000256" key="4">
    <source>
        <dbReference type="SAM" id="MobiDB-lite"/>
    </source>
</evidence>
<evidence type="ECO:0000269" key="5">
    <source>
    </source>
</evidence>
<evidence type="ECO:0000269" key="6">
    <source>
    </source>
</evidence>
<evidence type="ECO:0000269" key="7">
    <source>
    </source>
</evidence>
<evidence type="ECO:0000269" key="8">
    <source>
    </source>
</evidence>
<evidence type="ECO:0000303" key="9">
    <source>
    </source>
</evidence>
<evidence type="ECO:0000305" key="10"/>
<evidence type="ECO:0000305" key="11">
    <source>
    </source>
</evidence>
<evidence type="ECO:0000312" key="12">
    <source>
        <dbReference type="Proteomes" id="UP000001940"/>
    </source>
</evidence>
<evidence type="ECO:0000312" key="13">
    <source>
        <dbReference type="WormBase" id="C30F12.1"/>
    </source>
</evidence>
<protein>
    <recommendedName>
        <fullName evidence="11">Endoribonuclease rege-1</fullName>
        <ecNumber evidence="6">3.1.-.-</ecNumber>
    </recommendedName>
    <alternativeName>
        <fullName evidence="10">Zinc finger CCCH domain-containing protein rege-1</fullName>
    </alternativeName>
</protein>
<feature type="chain" id="PRO_0000438851" description="Endoribonuclease rege-1" evidence="10">
    <location>
        <begin position="1"/>
        <end position="634"/>
    </location>
</feature>
<feature type="domain" description="RNase NYN" evidence="2">
    <location>
        <begin position="225"/>
        <end position="377"/>
    </location>
</feature>
<feature type="zinc finger region" description="C3H1-type" evidence="3">
    <location>
        <begin position="387"/>
        <end position="412"/>
    </location>
</feature>
<feature type="region of interest" description="Disordered" evidence="4">
    <location>
        <begin position="1"/>
        <end position="33"/>
    </location>
</feature>
<feature type="region of interest" description="Disordered" evidence="4">
    <location>
        <begin position="90"/>
        <end position="113"/>
    </location>
</feature>
<feature type="region of interest" description="Disordered" evidence="4">
    <location>
        <begin position="156"/>
        <end position="223"/>
    </location>
</feature>
<feature type="compositionally biased region" description="Basic and acidic residues" evidence="4">
    <location>
        <begin position="97"/>
        <end position="106"/>
    </location>
</feature>
<feature type="compositionally biased region" description="Low complexity" evidence="4">
    <location>
        <begin position="182"/>
        <end position="194"/>
    </location>
</feature>
<feature type="compositionally biased region" description="Low complexity" evidence="4">
    <location>
        <begin position="201"/>
        <end position="217"/>
    </location>
</feature>
<feature type="binding site" evidence="1">
    <location>
        <position position="314"/>
    </location>
    <ligand>
        <name>Mg(2+)</name>
        <dbReference type="ChEBI" id="CHEBI:18420"/>
    </ligand>
</feature>
<feature type="mutagenesis site" description="In tm2265; has a shorter lifespan when fed E.coli strain OP50 which is reduced further when feeding on P.aeruginosa strain PA14." evidence="8">
    <location>
        <begin position="148"/>
        <end position="634"/>
    </location>
</feature>
<feature type="mutagenesis site" description="Loss of ribonuclease activity; when associated with A-313, A-314 and A-332. In imm070; has a shorter lifespan when fed E.coli strain OP50 which is reduced further when feeding on P.aeruginosa strain PA14. However, the lifespan is extended in ets-4 mutant background when feeding on OP50 and unchanged with P.aeruginosa. Lifespan is extended on P.aeruginosa only in daf-2 mutant background." evidence="6 8">
    <original>D</original>
    <variation>N</variation>
    <location>
        <position position="231"/>
    </location>
</feature>
<feature type="mutagenesis site" description="Loss of ribonuclease activity; when associated with N-231; A-314 and A-332." evidence="6">
    <original>D</original>
    <variation>A</variation>
    <location>
        <position position="313"/>
    </location>
</feature>
<feature type="mutagenesis site" description="Loss of ribonuclease activity; when associated with N-231; A-313, and A-332." evidence="6">
    <original>D</original>
    <variation>A</variation>
    <location>
        <position position="314"/>
    </location>
</feature>
<feature type="mutagenesis site" description="Loss of ribonuclease activity; when associated with N-231; A-313 and A-314." evidence="6">
    <original>D</original>
    <variation>A</variation>
    <location>
        <position position="332"/>
    </location>
</feature>
<organism evidence="12">
    <name type="scientific">Caenorhabditis elegans</name>
    <dbReference type="NCBI Taxonomy" id="6239"/>
    <lineage>
        <taxon>Eukaryota</taxon>
        <taxon>Metazoa</taxon>
        <taxon>Ecdysozoa</taxon>
        <taxon>Nematoda</taxon>
        <taxon>Chromadorea</taxon>
        <taxon>Rhabditida</taxon>
        <taxon>Rhabditina</taxon>
        <taxon>Rhabditomorpha</taxon>
        <taxon>Rhabditoidea</taxon>
        <taxon>Rhabditidae</taxon>
        <taxon>Peloderinae</taxon>
        <taxon>Caenorhabditis</taxon>
    </lineage>
</organism>